<proteinExistence type="evidence at transcript level"/>
<reference key="1">
    <citation type="journal article" date="1998" name="Plant J.">
        <title>Towards functional characterisation of the members of the R2R3-MYB gene family from Arabidopsis thaliana.</title>
        <authorList>
            <person name="Kranz H.D."/>
            <person name="Denekamp M."/>
            <person name="Greco R."/>
            <person name="Jin H.-L."/>
            <person name="Leyva A."/>
            <person name="Meissner R.C."/>
            <person name="Petroni K."/>
            <person name="Urzainqui A."/>
            <person name="Bevan M."/>
            <person name="Martin C."/>
            <person name="Smeekens S."/>
            <person name="Tonelli C."/>
            <person name="Paz-Ares J."/>
            <person name="Weisshaar B."/>
        </authorList>
    </citation>
    <scope>NUCLEOTIDE SEQUENCE [MRNA]</scope>
    <scope>GENE FAMILY</scope>
    <scope>NOMENCLATURE</scope>
    <source>
        <strain>cv. Columbia</strain>
    </source>
</reference>
<reference key="2">
    <citation type="submission" date="2009-03" db="EMBL/GenBank/DDBJ databases">
        <title>ORF cloning and analysis of Arabidopsis transcription factor genes.</title>
        <authorList>
            <person name="Fujita M."/>
        </authorList>
    </citation>
    <scope>NUCLEOTIDE SEQUENCE [MRNA]</scope>
</reference>
<reference key="3">
    <citation type="journal article" date="1999" name="Nature">
        <title>Sequence and analysis of chromosome 2 of the plant Arabidopsis thaliana.</title>
        <authorList>
            <person name="Lin X."/>
            <person name="Kaul S."/>
            <person name="Rounsley S.D."/>
            <person name="Shea T.P."/>
            <person name="Benito M.-I."/>
            <person name="Town C.D."/>
            <person name="Fujii C.Y."/>
            <person name="Mason T.M."/>
            <person name="Bowman C.L."/>
            <person name="Barnstead M.E."/>
            <person name="Feldblyum T.V."/>
            <person name="Buell C.R."/>
            <person name="Ketchum K.A."/>
            <person name="Lee J.J."/>
            <person name="Ronning C.M."/>
            <person name="Koo H.L."/>
            <person name="Moffat K.S."/>
            <person name="Cronin L.A."/>
            <person name="Shen M."/>
            <person name="Pai G."/>
            <person name="Van Aken S."/>
            <person name="Umayam L."/>
            <person name="Tallon L.J."/>
            <person name="Gill J.E."/>
            <person name="Adams M.D."/>
            <person name="Carrera A.J."/>
            <person name="Creasy T.H."/>
            <person name="Goodman H.M."/>
            <person name="Somerville C.R."/>
            <person name="Copenhaver G.P."/>
            <person name="Preuss D."/>
            <person name="Nierman W.C."/>
            <person name="White O."/>
            <person name="Eisen J.A."/>
            <person name="Salzberg S.L."/>
            <person name="Fraser C.M."/>
            <person name="Venter J.C."/>
        </authorList>
    </citation>
    <scope>NUCLEOTIDE SEQUENCE [LARGE SCALE GENOMIC DNA]</scope>
    <source>
        <strain>cv. Columbia</strain>
    </source>
</reference>
<reference key="4">
    <citation type="journal article" date="2017" name="Plant J.">
        <title>Araport11: a complete reannotation of the Arabidopsis thaliana reference genome.</title>
        <authorList>
            <person name="Cheng C.Y."/>
            <person name="Krishnakumar V."/>
            <person name="Chan A.P."/>
            <person name="Thibaud-Nissen F."/>
            <person name="Schobel S."/>
            <person name="Town C.D."/>
        </authorList>
    </citation>
    <scope>GENOME REANNOTATION</scope>
    <source>
        <strain>cv. Columbia</strain>
    </source>
</reference>
<reference key="5">
    <citation type="journal article" date="2001" name="Curr. Opin. Plant Biol.">
        <title>The R2R3-MYB gene family in Arabidopsis thaliana.</title>
        <authorList>
            <person name="Stracke R."/>
            <person name="Werber M."/>
            <person name="Weisshaar B."/>
        </authorList>
    </citation>
    <scope>GENE FAMILY</scope>
    <scope>NOMENCLATURE</scope>
    <source>
        <strain>cv. Columbia</strain>
    </source>
</reference>
<reference key="6">
    <citation type="journal article" date="2004" name="Plant Cell">
        <title>Novel and stress-regulated microRNAs and other small RNAs from Arabidopsis.</title>
        <authorList>
            <person name="Sunkar R."/>
            <person name="Zhu J.-K."/>
        </authorList>
    </citation>
    <scope>INDUCTION</scope>
</reference>
<reference key="7">
    <citation type="journal article" date="2012" name="Sex. Plant Reprod.">
        <title>Wide-scale screening of T-DNA lines for transcription factor genes affecting male gametophyte development in Arabidopsis.</title>
        <authorList>
            <person name="Renak D."/>
            <person name="Dupl'akova N."/>
            <person name="Honys D."/>
        </authorList>
    </citation>
    <scope>FUNCTION</scope>
    <scope>DISRUPTION PHENOTYPE</scope>
</reference>
<name>MYB25_ARATH</name>
<comment type="function">
    <text evidence="4">Required for male gametophyte (pollen) development.</text>
</comment>
<comment type="subcellular location">
    <subcellularLocation>
        <location evidence="1">Nucleus</location>
    </subcellularLocation>
</comment>
<comment type="induction">
    <text evidence="3">May be the target of the microRNA (miRNA) MIR393a.</text>
</comment>
<comment type="disruption phenotype">
    <text evidence="4">Abnormal male gametophyte (pollen) development including deformed cell wall, two-celled phenotype (one regular vegetative nucleus and one sperm cell-like nucleus, both in center) and semtimes leading to abortion.</text>
</comment>
<keyword id="KW-0238">DNA-binding</keyword>
<keyword id="KW-0539">Nucleus</keyword>
<keyword id="KW-1185">Reference proteome</keyword>
<keyword id="KW-0677">Repeat</keyword>
<keyword id="KW-0804">Transcription</keyword>
<keyword id="KW-0805">Transcription regulation</keyword>
<protein>
    <recommendedName>
        <fullName evidence="5">Transcription factor MYB25</fullName>
    </recommendedName>
    <alternativeName>
        <fullName evidence="5">Myb-related protein 25</fullName>
        <shortName evidence="5">AtMYB25</shortName>
    </alternativeName>
</protein>
<gene>
    <name evidence="5" type="primary">MYB25</name>
    <name evidence="6" type="ordered locus">At2g39880</name>
    <name evidence="7" type="ORF">T28M21.4</name>
</gene>
<feature type="chain" id="PRO_0000438811" description="Transcription factor MYB25">
    <location>
        <begin position="1"/>
        <end position="367"/>
    </location>
</feature>
<feature type="domain" description="HTH myb-type 1" evidence="1">
    <location>
        <begin position="45"/>
        <end position="100"/>
    </location>
</feature>
<feature type="domain" description="HTH myb-type 2" evidence="1">
    <location>
        <begin position="101"/>
        <end position="151"/>
    </location>
</feature>
<feature type="DNA-binding region" description="H-T-H motif" evidence="1">
    <location>
        <begin position="73"/>
        <end position="96"/>
    </location>
</feature>
<feature type="DNA-binding region" description="H-T-H motif" evidence="1">
    <location>
        <begin position="124"/>
        <end position="147"/>
    </location>
</feature>
<feature type="region of interest" description="Disordered" evidence="2">
    <location>
        <begin position="181"/>
        <end position="216"/>
    </location>
</feature>
<evidence type="ECO:0000255" key="1">
    <source>
        <dbReference type="PROSITE-ProRule" id="PRU00625"/>
    </source>
</evidence>
<evidence type="ECO:0000256" key="2">
    <source>
        <dbReference type="SAM" id="MobiDB-lite"/>
    </source>
</evidence>
<evidence type="ECO:0000269" key="3">
    <source>
    </source>
</evidence>
<evidence type="ECO:0000269" key="4">
    <source>
    </source>
</evidence>
<evidence type="ECO:0000303" key="5">
    <source>
    </source>
</evidence>
<evidence type="ECO:0000312" key="6">
    <source>
        <dbReference type="Araport" id="AT2G39880"/>
    </source>
</evidence>
<evidence type="ECO:0000312" key="7">
    <source>
        <dbReference type="EMBL" id="AAB95273.1"/>
    </source>
</evidence>
<organism>
    <name type="scientific">Arabidopsis thaliana</name>
    <name type="common">Mouse-ear cress</name>
    <dbReference type="NCBI Taxonomy" id="3702"/>
    <lineage>
        <taxon>Eukaryota</taxon>
        <taxon>Viridiplantae</taxon>
        <taxon>Streptophyta</taxon>
        <taxon>Embryophyta</taxon>
        <taxon>Tracheophyta</taxon>
        <taxon>Spermatophyta</taxon>
        <taxon>Magnoliopsida</taxon>
        <taxon>eudicotyledons</taxon>
        <taxon>Gunneridae</taxon>
        <taxon>Pentapetalae</taxon>
        <taxon>rosids</taxon>
        <taxon>malvids</taxon>
        <taxon>Brassicales</taxon>
        <taxon>Brassicaceae</taxon>
        <taxon>Camelineae</taxon>
        <taxon>Arabidopsis</taxon>
    </lineage>
</organism>
<dbReference type="EMBL" id="AF175988">
    <property type="protein sequence ID" value="AAD53093.1"/>
    <property type="molecule type" value="mRNA"/>
</dbReference>
<dbReference type="EMBL" id="AB493582">
    <property type="protein sequence ID" value="BAH30420.1"/>
    <property type="molecule type" value="mRNA"/>
</dbReference>
<dbReference type="EMBL" id="AC003000">
    <property type="protein sequence ID" value="AAM14852.1"/>
    <property type="molecule type" value="Genomic_DNA"/>
</dbReference>
<dbReference type="EMBL" id="AF002109">
    <property type="protein sequence ID" value="AAB95273.1"/>
    <property type="molecule type" value="Genomic_DNA"/>
</dbReference>
<dbReference type="EMBL" id="CP002685">
    <property type="protein sequence ID" value="AEC09744.1"/>
    <property type="molecule type" value="Genomic_DNA"/>
</dbReference>
<dbReference type="PIR" id="T01017">
    <property type="entry name" value="T01017"/>
</dbReference>
<dbReference type="RefSeq" id="NP_181517.1">
    <property type="nucleotide sequence ID" value="NM_129546.2"/>
</dbReference>
<dbReference type="SMR" id="O04192"/>
<dbReference type="FunCoup" id="O04192">
    <property type="interactions" value="40"/>
</dbReference>
<dbReference type="STRING" id="3702.O04192"/>
<dbReference type="PaxDb" id="3702-AT2G39880.1"/>
<dbReference type="EnsemblPlants" id="AT2G39880.1">
    <property type="protein sequence ID" value="AT2G39880.1"/>
    <property type="gene ID" value="AT2G39880"/>
</dbReference>
<dbReference type="GeneID" id="818575"/>
<dbReference type="Gramene" id="AT2G39880.1">
    <property type="protein sequence ID" value="AT2G39880.1"/>
    <property type="gene ID" value="AT2G39880"/>
</dbReference>
<dbReference type="KEGG" id="ath:AT2G39880"/>
<dbReference type="Araport" id="AT2G39880"/>
<dbReference type="TAIR" id="AT2G39880">
    <property type="gene designation" value="MYB25"/>
</dbReference>
<dbReference type="eggNOG" id="KOG0048">
    <property type="taxonomic scope" value="Eukaryota"/>
</dbReference>
<dbReference type="HOGENOM" id="CLU_047891_3_0_1"/>
<dbReference type="InParanoid" id="O04192"/>
<dbReference type="OMA" id="IMSAHAV"/>
<dbReference type="OrthoDB" id="2143914at2759"/>
<dbReference type="PhylomeDB" id="O04192"/>
<dbReference type="PRO" id="PR:O04192"/>
<dbReference type="Proteomes" id="UP000006548">
    <property type="component" value="Chromosome 2"/>
</dbReference>
<dbReference type="ExpressionAtlas" id="O04192">
    <property type="expression patterns" value="baseline and differential"/>
</dbReference>
<dbReference type="GO" id="GO:0016607">
    <property type="term" value="C:nuclear speck"/>
    <property type="evidence" value="ECO:0000314"/>
    <property type="project" value="TAIR"/>
</dbReference>
<dbReference type="GO" id="GO:0003677">
    <property type="term" value="F:DNA binding"/>
    <property type="evidence" value="ECO:0007669"/>
    <property type="project" value="UniProtKB-KW"/>
</dbReference>
<dbReference type="GO" id="GO:0003700">
    <property type="term" value="F:DNA-binding transcription factor activity"/>
    <property type="evidence" value="ECO:0000250"/>
    <property type="project" value="TAIR"/>
</dbReference>
<dbReference type="GO" id="GO:0009555">
    <property type="term" value="P:pollen development"/>
    <property type="evidence" value="ECO:0000315"/>
    <property type="project" value="TAIR"/>
</dbReference>
<dbReference type="GO" id="GO:0006355">
    <property type="term" value="P:regulation of DNA-templated transcription"/>
    <property type="evidence" value="ECO:0000304"/>
    <property type="project" value="TAIR"/>
</dbReference>
<dbReference type="CDD" id="cd00167">
    <property type="entry name" value="SANT"/>
    <property type="match status" value="2"/>
</dbReference>
<dbReference type="FunFam" id="1.10.10.60:FF:000060">
    <property type="entry name" value="MYB transcription factor"/>
    <property type="match status" value="1"/>
</dbReference>
<dbReference type="Gene3D" id="1.10.10.60">
    <property type="entry name" value="Homeodomain-like"/>
    <property type="match status" value="2"/>
</dbReference>
<dbReference type="InterPro" id="IPR009057">
    <property type="entry name" value="Homeodomain-like_sf"/>
</dbReference>
<dbReference type="InterPro" id="IPR017930">
    <property type="entry name" value="Myb_dom"/>
</dbReference>
<dbReference type="InterPro" id="IPR050560">
    <property type="entry name" value="MYB_TF"/>
</dbReference>
<dbReference type="InterPro" id="IPR001005">
    <property type="entry name" value="SANT/Myb"/>
</dbReference>
<dbReference type="PANTHER" id="PTHR45614">
    <property type="entry name" value="MYB PROTEIN-RELATED"/>
    <property type="match status" value="1"/>
</dbReference>
<dbReference type="PANTHER" id="PTHR45614:SF229">
    <property type="entry name" value="MYB TRANSCRIPTION FACTOR-LIKE PROTEIN-RELATED"/>
    <property type="match status" value="1"/>
</dbReference>
<dbReference type="Pfam" id="PF00249">
    <property type="entry name" value="Myb_DNA-binding"/>
    <property type="match status" value="2"/>
</dbReference>
<dbReference type="SMART" id="SM00717">
    <property type="entry name" value="SANT"/>
    <property type="match status" value="2"/>
</dbReference>
<dbReference type="SUPFAM" id="SSF46689">
    <property type="entry name" value="Homeodomain-like"/>
    <property type="match status" value="1"/>
</dbReference>
<dbReference type="PROSITE" id="PS51294">
    <property type="entry name" value="HTH_MYB"/>
    <property type="match status" value="2"/>
</dbReference>
<accession>O04192</accession>
<sequence>MNGEISRPPELISSRNPCKSFENAIHKAVEAELAELAKSDANGGGKSKVKGPWLPEQDEALTRLVKMCGPRNWNLISRGIPGRSGKSCRLRWCNQLDPILKRKPFSDEEEHMIMSAQAVLGNKWSVIAKLLPGRTDNAIKNHWNSNLRRKPAEQWKIPLLMSNTEIVYQLYPSMVRRISNASPKEHLPQEEETGVLSDDKMDDEAKEPPREQNSKTGVYRPVARMGAFSVCKPGYMAPCEGPLVQASRPDSLAGKFLQSLCYDPIIPSKCGHGCCNHQDSTTLSSSSVLGSEFVDYEEHSSAELDKELISISNDLNNTAWIRSGKEAEQSLKADDQFRREYAHSKFSGMVNNGVSSQMVRQDLRALS</sequence>